<protein>
    <recommendedName>
        <fullName>Putative 4-hydroxy-4-methyl-2-oxoglutarate aldolase</fullName>
        <shortName>HMG aldolase</shortName>
        <ecNumber>4.1.3.17</ecNumber>
    </recommendedName>
    <alternativeName>
        <fullName>Oxaloacetate decarboxylase</fullName>
        <shortName>OAA decarboxylase</shortName>
        <ecNumber>4.1.1.112</ecNumber>
    </alternativeName>
    <alternativeName>
        <fullName>Regulator of ribonuclease activity homolog</fullName>
    </alternativeName>
    <alternativeName>
        <fullName>RraA-like protein</fullName>
    </alternativeName>
</protein>
<dbReference type="EC" id="4.1.3.17"/>
<dbReference type="EC" id="4.1.1.112"/>
<dbReference type="EMBL" id="BA000037">
    <property type="protein sequence ID" value="BAC93412.1"/>
    <property type="status" value="ALT_INIT"/>
    <property type="molecule type" value="Genomic_DNA"/>
</dbReference>
<dbReference type="RefSeq" id="WP_011078634.1">
    <property type="nucleotide sequence ID" value="NC_005139.1"/>
</dbReference>
<dbReference type="SMR" id="Q7MNR7"/>
<dbReference type="STRING" id="672.VV93_v1c05870"/>
<dbReference type="KEGG" id="vvy:VV0648"/>
<dbReference type="eggNOG" id="COG0684">
    <property type="taxonomic scope" value="Bacteria"/>
</dbReference>
<dbReference type="HOGENOM" id="CLU_072626_4_0_6"/>
<dbReference type="Proteomes" id="UP000002675">
    <property type="component" value="Chromosome I"/>
</dbReference>
<dbReference type="GO" id="GO:0047443">
    <property type="term" value="F:4-hydroxy-4-methyl-2-oxoglutarate aldolase activity"/>
    <property type="evidence" value="ECO:0007669"/>
    <property type="project" value="UniProtKB-EC"/>
</dbReference>
<dbReference type="GO" id="GO:0046872">
    <property type="term" value="F:metal ion binding"/>
    <property type="evidence" value="ECO:0007669"/>
    <property type="project" value="UniProtKB-KW"/>
</dbReference>
<dbReference type="GO" id="GO:0008948">
    <property type="term" value="F:oxaloacetate decarboxylase activity"/>
    <property type="evidence" value="ECO:0007669"/>
    <property type="project" value="UniProtKB-EC"/>
</dbReference>
<dbReference type="GO" id="GO:0008428">
    <property type="term" value="F:ribonuclease inhibitor activity"/>
    <property type="evidence" value="ECO:0007669"/>
    <property type="project" value="InterPro"/>
</dbReference>
<dbReference type="GO" id="GO:0051252">
    <property type="term" value="P:regulation of RNA metabolic process"/>
    <property type="evidence" value="ECO:0007669"/>
    <property type="project" value="InterPro"/>
</dbReference>
<dbReference type="CDD" id="cd16841">
    <property type="entry name" value="RraA_family"/>
    <property type="match status" value="1"/>
</dbReference>
<dbReference type="Gene3D" id="3.50.30.40">
    <property type="entry name" value="Ribonuclease E inhibitor RraA/RraA-like"/>
    <property type="match status" value="1"/>
</dbReference>
<dbReference type="InterPro" id="IPR010203">
    <property type="entry name" value="RraA"/>
</dbReference>
<dbReference type="InterPro" id="IPR005493">
    <property type="entry name" value="RraA/RraA-like"/>
</dbReference>
<dbReference type="InterPro" id="IPR036704">
    <property type="entry name" value="RraA/RraA-like_sf"/>
</dbReference>
<dbReference type="NCBIfam" id="TIGR01935">
    <property type="entry name" value="NOT-MenG"/>
    <property type="match status" value="1"/>
</dbReference>
<dbReference type="NCBIfam" id="NF006875">
    <property type="entry name" value="PRK09372.1"/>
    <property type="match status" value="1"/>
</dbReference>
<dbReference type="NCBIfam" id="NF009134">
    <property type="entry name" value="PRK12487.1"/>
    <property type="match status" value="1"/>
</dbReference>
<dbReference type="PANTHER" id="PTHR33254">
    <property type="entry name" value="4-HYDROXY-4-METHYL-2-OXOGLUTARATE ALDOLASE 3-RELATED"/>
    <property type="match status" value="1"/>
</dbReference>
<dbReference type="PANTHER" id="PTHR33254:SF4">
    <property type="entry name" value="4-HYDROXY-4-METHYL-2-OXOGLUTARATE ALDOLASE 3-RELATED"/>
    <property type="match status" value="1"/>
</dbReference>
<dbReference type="Pfam" id="PF03737">
    <property type="entry name" value="RraA-like"/>
    <property type="match status" value="1"/>
</dbReference>
<dbReference type="SUPFAM" id="SSF89562">
    <property type="entry name" value="RraA-like"/>
    <property type="match status" value="1"/>
</dbReference>
<evidence type="ECO:0000250" key="1"/>
<evidence type="ECO:0000305" key="2"/>
<comment type="function">
    <text evidence="1">Catalyzes the aldol cleavage of 4-hydroxy-4-methyl-2-oxoglutarate (HMG) into 2 molecules of pyruvate. Also contains a secondary oxaloacetate (OAA) decarboxylase activity due to the common pyruvate enolate transition state formed following C-C bond cleavage in the retro-aldol and decarboxylation reactions (By similarity).</text>
</comment>
<comment type="catalytic activity">
    <reaction>
        <text>4-hydroxy-4-methyl-2-oxoglutarate = 2 pyruvate</text>
        <dbReference type="Rhea" id="RHEA:22748"/>
        <dbReference type="ChEBI" id="CHEBI:15361"/>
        <dbReference type="ChEBI" id="CHEBI:58276"/>
        <dbReference type="EC" id="4.1.3.17"/>
    </reaction>
</comment>
<comment type="catalytic activity">
    <reaction>
        <text>oxaloacetate + H(+) = pyruvate + CO2</text>
        <dbReference type="Rhea" id="RHEA:15641"/>
        <dbReference type="ChEBI" id="CHEBI:15361"/>
        <dbReference type="ChEBI" id="CHEBI:15378"/>
        <dbReference type="ChEBI" id="CHEBI:16452"/>
        <dbReference type="ChEBI" id="CHEBI:16526"/>
        <dbReference type="EC" id="4.1.1.112"/>
    </reaction>
</comment>
<comment type="cofactor">
    <cofactor evidence="1">
        <name>a divalent metal cation</name>
        <dbReference type="ChEBI" id="CHEBI:60240"/>
    </cofactor>
    <text evidence="1">Divalent metal cation.</text>
</comment>
<comment type="subunit">
    <text evidence="1">Homotrimer.</text>
</comment>
<comment type="similarity">
    <text evidence="2">Belongs to the class II aldolase/RraA-like family.</text>
</comment>
<comment type="sequence caution" evidence="2">
    <conflict type="erroneous initiation">
        <sequence resource="EMBL-CDS" id="BAC93412"/>
    </conflict>
</comment>
<organism>
    <name type="scientific">Vibrio vulnificus (strain YJ016)</name>
    <dbReference type="NCBI Taxonomy" id="196600"/>
    <lineage>
        <taxon>Bacteria</taxon>
        <taxon>Pseudomonadati</taxon>
        <taxon>Pseudomonadota</taxon>
        <taxon>Gammaproteobacteria</taxon>
        <taxon>Vibrionales</taxon>
        <taxon>Vibrionaceae</taxon>
        <taxon>Vibrio</taxon>
    </lineage>
</organism>
<keyword id="KW-0456">Lyase</keyword>
<keyword id="KW-0479">Metal-binding</keyword>
<name>RRAAH_VIBVY</name>
<accession>Q7MNR7</accession>
<feature type="chain" id="PRO_0000209646" description="Putative 4-hydroxy-4-methyl-2-oxoglutarate aldolase">
    <location>
        <begin position="1"/>
        <end position="160"/>
    </location>
</feature>
<feature type="binding site" evidence="1">
    <location>
        <begin position="75"/>
        <end position="78"/>
    </location>
    <ligand>
        <name>substrate</name>
    </ligand>
</feature>
<feature type="binding site" evidence="1">
    <location>
        <position position="97"/>
    </location>
    <ligand>
        <name>substrate</name>
    </ligand>
</feature>
<feature type="binding site" evidence="1">
    <location>
        <position position="98"/>
    </location>
    <ligand>
        <name>a divalent metal cation</name>
        <dbReference type="ChEBI" id="CHEBI:60240"/>
    </ligand>
</feature>
<sequence>MKDITPDICDQHEDKVTLLNLPLQNFGQKAAFFGEIVTVRCYHDNSKVRDVLSENGKGKVLVVDGHGSCQKALLGDQLAILAIENDWEGVIVFGAVRDVAQMSQMELGIKALGTSPFKTEKRGAGEVNVTLTMHNQMVQPKDYIYADWNGILISKELLQF</sequence>
<gene>
    <name type="ordered locus">VV0648</name>
</gene>
<proteinExistence type="inferred from homology"/>
<reference key="1">
    <citation type="journal article" date="2003" name="Genome Res.">
        <title>Comparative genome analysis of Vibrio vulnificus, a marine pathogen.</title>
        <authorList>
            <person name="Chen C.-Y."/>
            <person name="Wu K.-M."/>
            <person name="Chang Y.-C."/>
            <person name="Chang C.-H."/>
            <person name="Tsai H.-C."/>
            <person name="Liao T.-L."/>
            <person name="Liu Y.-M."/>
            <person name="Chen H.-J."/>
            <person name="Shen A.B.-T."/>
            <person name="Li J.-C."/>
            <person name="Su T.-L."/>
            <person name="Shao C.-P."/>
            <person name="Lee C.-T."/>
            <person name="Hor L.-I."/>
            <person name="Tsai S.-F."/>
        </authorList>
    </citation>
    <scope>NUCLEOTIDE SEQUENCE [LARGE SCALE GENOMIC DNA]</scope>
    <source>
        <strain>YJ016</strain>
    </source>
</reference>